<evidence type="ECO:0000255" key="1">
    <source>
        <dbReference type="HAMAP-Rule" id="MF_01536"/>
    </source>
</evidence>
<organism>
    <name type="scientific">Staphylococcus haemolyticus (strain JCSC1435)</name>
    <dbReference type="NCBI Taxonomy" id="279808"/>
    <lineage>
        <taxon>Bacteria</taxon>
        <taxon>Bacillati</taxon>
        <taxon>Bacillota</taxon>
        <taxon>Bacilli</taxon>
        <taxon>Bacillales</taxon>
        <taxon>Staphylococcaceae</taxon>
        <taxon>Staphylococcus</taxon>
    </lineage>
</organism>
<protein>
    <recommendedName>
        <fullName evidence="1">UPF0344 protein SH1980</fullName>
    </recommendedName>
</protein>
<keyword id="KW-1003">Cell membrane</keyword>
<keyword id="KW-0472">Membrane</keyword>
<keyword id="KW-0812">Transmembrane</keyword>
<keyword id="KW-1133">Transmembrane helix</keyword>
<proteinExistence type="inferred from homology"/>
<feature type="chain" id="PRO_1000068725" description="UPF0344 protein SH1980">
    <location>
        <begin position="1"/>
        <end position="133"/>
    </location>
</feature>
<feature type="transmembrane region" description="Helical" evidence="1">
    <location>
        <begin position="1"/>
        <end position="21"/>
    </location>
</feature>
<feature type="transmembrane region" description="Helical" evidence="1">
    <location>
        <begin position="42"/>
        <end position="62"/>
    </location>
</feature>
<feature type="transmembrane region" description="Helical" evidence="1">
    <location>
        <begin position="71"/>
        <end position="91"/>
    </location>
</feature>
<feature type="transmembrane region" description="Helical" evidence="1">
    <location>
        <begin position="103"/>
        <end position="123"/>
    </location>
</feature>
<accession>Q4L4Y6</accession>
<comment type="subcellular location">
    <subcellularLocation>
        <location evidence="1">Cell membrane</location>
        <topology evidence="1">Multi-pass membrane protein</topology>
    </subcellularLocation>
</comment>
<comment type="similarity">
    <text evidence="1">Belongs to the UPF0344 family.</text>
</comment>
<name>Y1980_STAHJ</name>
<dbReference type="EMBL" id="AP006716">
    <property type="protein sequence ID" value="BAE05289.1"/>
    <property type="molecule type" value="Genomic_DNA"/>
</dbReference>
<dbReference type="RefSeq" id="WP_011276247.1">
    <property type="nucleotide sequence ID" value="NC_007168.1"/>
</dbReference>
<dbReference type="KEGG" id="sha:SH1980"/>
<dbReference type="eggNOG" id="ENOG5033A1U">
    <property type="taxonomic scope" value="Bacteria"/>
</dbReference>
<dbReference type="HOGENOM" id="CLU_146641_2_0_9"/>
<dbReference type="OrthoDB" id="2365314at2"/>
<dbReference type="Proteomes" id="UP000000543">
    <property type="component" value="Chromosome"/>
</dbReference>
<dbReference type="GO" id="GO:0005886">
    <property type="term" value="C:plasma membrane"/>
    <property type="evidence" value="ECO:0007669"/>
    <property type="project" value="UniProtKB-SubCell"/>
</dbReference>
<dbReference type="HAMAP" id="MF_01536">
    <property type="entry name" value="UPF0344"/>
    <property type="match status" value="1"/>
</dbReference>
<dbReference type="InterPro" id="IPR010899">
    <property type="entry name" value="UPF0344"/>
</dbReference>
<dbReference type="NCBIfam" id="NF010195">
    <property type="entry name" value="PRK13673.1-2"/>
    <property type="match status" value="1"/>
</dbReference>
<dbReference type="NCBIfam" id="NF010199">
    <property type="entry name" value="PRK13673.1-6"/>
    <property type="match status" value="1"/>
</dbReference>
<dbReference type="Pfam" id="PF07457">
    <property type="entry name" value="DUF1516"/>
    <property type="match status" value="1"/>
</dbReference>
<gene>
    <name type="ordered locus">SH1980</name>
</gene>
<reference key="1">
    <citation type="journal article" date="2005" name="J. Bacteriol.">
        <title>Whole-genome sequencing of Staphylococcus haemolyticus uncovers the extreme plasticity of its genome and the evolution of human-colonizing staphylococcal species.</title>
        <authorList>
            <person name="Takeuchi F."/>
            <person name="Watanabe S."/>
            <person name="Baba T."/>
            <person name="Yuzawa H."/>
            <person name="Ito T."/>
            <person name="Morimoto Y."/>
            <person name="Kuroda M."/>
            <person name="Cui L."/>
            <person name="Takahashi M."/>
            <person name="Ankai A."/>
            <person name="Baba S."/>
            <person name="Fukui S."/>
            <person name="Lee J.C."/>
            <person name="Hiramatsu K."/>
        </authorList>
    </citation>
    <scope>NUCLEOTIDE SEQUENCE [LARGE SCALE GENOMIC DNA]</scope>
    <source>
        <strain>JCSC1435</strain>
    </source>
</reference>
<sequence>MLHMHIASWALTIILYVIAFLHISKSQGPTPMFKPLQMALRVFMLLTLFSGFWLLIQEFMAASHGGGGNHMLLTLKMLCGIAVVALMEVSIAKRKKHEASHGLFWATIILIIITMSLGIILPWGPISSLFGIS</sequence>